<reference key="1">
    <citation type="journal article" date="2005" name="Proc. Natl. Acad. Sci. U.S.A.">
        <title>Complete genome sequence of Vibrio fischeri: a symbiotic bacterium with pathogenic congeners.</title>
        <authorList>
            <person name="Ruby E.G."/>
            <person name="Urbanowski M."/>
            <person name="Campbell J."/>
            <person name="Dunn A."/>
            <person name="Faini M."/>
            <person name="Gunsalus R."/>
            <person name="Lostroh P."/>
            <person name="Lupp C."/>
            <person name="McCann J."/>
            <person name="Millikan D."/>
            <person name="Schaefer A."/>
            <person name="Stabb E."/>
            <person name="Stevens A."/>
            <person name="Visick K."/>
            <person name="Whistler C."/>
            <person name="Greenberg E.P."/>
        </authorList>
    </citation>
    <scope>NUCLEOTIDE SEQUENCE [LARGE SCALE GENOMIC DNA]</scope>
    <source>
        <strain>ATCC 700601 / ES114</strain>
    </source>
</reference>
<protein>
    <recommendedName>
        <fullName evidence="1">Co-chaperone protein DjlA</fullName>
    </recommendedName>
</protein>
<organism>
    <name type="scientific">Aliivibrio fischeri (strain ATCC 700601 / ES114)</name>
    <name type="common">Vibrio fischeri</name>
    <dbReference type="NCBI Taxonomy" id="312309"/>
    <lineage>
        <taxon>Bacteria</taxon>
        <taxon>Pseudomonadati</taxon>
        <taxon>Pseudomonadota</taxon>
        <taxon>Gammaproteobacteria</taxon>
        <taxon>Vibrionales</taxon>
        <taxon>Vibrionaceae</taxon>
        <taxon>Aliivibrio</taxon>
    </lineage>
</organism>
<name>DJLA_ALIF1</name>
<feature type="chain" id="PRO_0000209441" description="Co-chaperone protein DjlA">
    <location>
        <begin position="1"/>
        <end position="283"/>
    </location>
</feature>
<feature type="topological domain" description="Periplasmic" evidence="1">
    <location>
        <begin position="1"/>
        <end position="6"/>
    </location>
</feature>
<feature type="transmembrane region" description="Helical" evidence="1">
    <location>
        <begin position="7"/>
        <end position="30"/>
    </location>
</feature>
<feature type="topological domain" description="Cytoplasmic" evidence="1">
    <location>
        <begin position="31"/>
        <end position="283"/>
    </location>
</feature>
<feature type="domain" description="J" evidence="1">
    <location>
        <begin position="217"/>
        <end position="283"/>
    </location>
</feature>
<feature type="region of interest" description="Disordered" evidence="2">
    <location>
        <begin position="188"/>
        <end position="210"/>
    </location>
</feature>
<feature type="compositionally biased region" description="Gly residues" evidence="2">
    <location>
        <begin position="188"/>
        <end position="197"/>
    </location>
</feature>
<feature type="compositionally biased region" description="Low complexity" evidence="2">
    <location>
        <begin position="198"/>
        <end position="210"/>
    </location>
</feature>
<dbReference type="EMBL" id="CP000020">
    <property type="protein sequence ID" value="AAW84785.1"/>
    <property type="molecule type" value="Genomic_DNA"/>
</dbReference>
<dbReference type="RefSeq" id="WP_005417332.1">
    <property type="nucleotide sequence ID" value="NZ_CAWLES010000001.1"/>
</dbReference>
<dbReference type="RefSeq" id="YP_203673.1">
    <property type="nucleotide sequence ID" value="NC_006840.2"/>
</dbReference>
<dbReference type="SMR" id="Q5E861"/>
<dbReference type="STRING" id="312309.VF_0290"/>
<dbReference type="EnsemblBacteria" id="AAW84785">
    <property type="protein sequence ID" value="AAW84785"/>
    <property type="gene ID" value="VF_0290"/>
</dbReference>
<dbReference type="GeneID" id="54162910"/>
<dbReference type="KEGG" id="vfi:VF_0290"/>
<dbReference type="PATRIC" id="fig|312309.11.peg.284"/>
<dbReference type="eggNOG" id="COG1076">
    <property type="taxonomic scope" value="Bacteria"/>
</dbReference>
<dbReference type="HOGENOM" id="CLU_066221_1_0_6"/>
<dbReference type="OrthoDB" id="9782583at2"/>
<dbReference type="Proteomes" id="UP000000537">
    <property type="component" value="Chromosome I"/>
</dbReference>
<dbReference type="GO" id="GO:0005886">
    <property type="term" value="C:plasma membrane"/>
    <property type="evidence" value="ECO:0007669"/>
    <property type="project" value="UniProtKB-SubCell"/>
</dbReference>
<dbReference type="GO" id="GO:0051087">
    <property type="term" value="F:protein-folding chaperone binding"/>
    <property type="evidence" value="ECO:0007669"/>
    <property type="project" value="InterPro"/>
</dbReference>
<dbReference type="CDD" id="cd06257">
    <property type="entry name" value="DnaJ"/>
    <property type="match status" value="1"/>
</dbReference>
<dbReference type="CDD" id="cd07316">
    <property type="entry name" value="terB_like_DjlA"/>
    <property type="match status" value="1"/>
</dbReference>
<dbReference type="FunFam" id="1.10.287.110:FF:000011">
    <property type="entry name" value="Co-chaperone protein DjlA"/>
    <property type="match status" value="1"/>
</dbReference>
<dbReference type="Gene3D" id="1.10.287.110">
    <property type="entry name" value="DnaJ domain"/>
    <property type="match status" value="1"/>
</dbReference>
<dbReference type="Gene3D" id="1.10.3680.10">
    <property type="entry name" value="TerB-like"/>
    <property type="match status" value="1"/>
</dbReference>
<dbReference type="HAMAP" id="MF_01153">
    <property type="entry name" value="DjlA"/>
    <property type="match status" value="1"/>
</dbReference>
<dbReference type="InterPro" id="IPR023749">
    <property type="entry name" value="DjlA"/>
</dbReference>
<dbReference type="InterPro" id="IPR050817">
    <property type="entry name" value="DjlA_DnaK_co-chaperone"/>
</dbReference>
<dbReference type="InterPro" id="IPR007791">
    <property type="entry name" value="DjlA_N"/>
</dbReference>
<dbReference type="InterPro" id="IPR001623">
    <property type="entry name" value="DnaJ_domain"/>
</dbReference>
<dbReference type="InterPro" id="IPR036869">
    <property type="entry name" value="J_dom_sf"/>
</dbReference>
<dbReference type="InterPro" id="IPR029024">
    <property type="entry name" value="TerB-like"/>
</dbReference>
<dbReference type="NCBIfam" id="NF006948">
    <property type="entry name" value="PRK09430.1"/>
    <property type="match status" value="1"/>
</dbReference>
<dbReference type="PANTHER" id="PTHR24074">
    <property type="entry name" value="CO-CHAPERONE PROTEIN DJLA"/>
    <property type="match status" value="1"/>
</dbReference>
<dbReference type="Pfam" id="PF00226">
    <property type="entry name" value="DnaJ"/>
    <property type="match status" value="1"/>
</dbReference>
<dbReference type="Pfam" id="PF05099">
    <property type="entry name" value="TerB"/>
    <property type="match status" value="1"/>
</dbReference>
<dbReference type="PRINTS" id="PR00625">
    <property type="entry name" value="JDOMAIN"/>
</dbReference>
<dbReference type="SMART" id="SM00271">
    <property type="entry name" value="DnaJ"/>
    <property type="match status" value="1"/>
</dbReference>
<dbReference type="SUPFAM" id="SSF46565">
    <property type="entry name" value="Chaperone J-domain"/>
    <property type="match status" value="1"/>
</dbReference>
<dbReference type="SUPFAM" id="SSF158682">
    <property type="entry name" value="TerB-like"/>
    <property type="match status" value="1"/>
</dbReference>
<dbReference type="PROSITE" id="PS50076">
    <property type="entry name" value="DNAJ_2"/>
    <property type="match status" value="1"/>
</dbReference>
<comment type="function">
    <text evidence="1">Regulatory DnaK co-chaperone. Direct interaction between DnaK and DjlA is needed for the induction of the wcaABCDE operon, involved in the synthesis of a colanic acid polysaccharide capsule, possibly through activation of the RcsB/RcsC phosphotransfer signaling pathway. The colanic acid capsule may help the bacterium survive conditions outside the host.</text>
</comment>
<comment type="subunit">
    <text evidence="1">Homodimer.</text>
</comment>
<comment type="subcellular location">
    <subcellularLocation>
        <location evidence="1">Cell inner membrane</location>
        <topology evidence="1">Single-pass type III membrane protein</topology>
    </subcellularLocation>
</comment>
<comment type="domain">
    <text evidence="1">The transmembrane domain is a dimerization domain.</text>
</comment>
<gene>
    <name evidence="1" type="primary">djlA</name>
    <name type="ordered locus">VF_0290</name>
</gene>
<proteinExistence type="inferred from homology"/>
<keyword id="KW-0997">Cell inner membrane</keyword>
<keyword id="KW-1003">Cell membrane</keyword>
<keyword id="KW-0143">Chaperone</keyword>
<keyword id="KW-0472">Membrane</keyword>
<keyword id="KW-1185">Reference proteome</keyword>
<keyword id="KW-0812">Transmembrane</keyword>
<keyword id="KW-1133">Transmembrane helix</keyword>
<sequence length="283" mass="31601">MQIFGKILGGFFGFLFGGFFGAALGIFIGHQFDKAKRMANSGFTFQTGGASQTQRQAEFFHAAYAVMGHVAKAKGQVTREEIQLASMMMDRMNLSDEQKREAQEAFREGKESDFPLRETLRNIRSITGGRYDLLQFFLELQIAAAIADGDIHPSERDVLHIVAEELGFSAEQLEKRLRMQEAAFRFQQGGGFSGHQSGGSHQQGQWQQASSASQLKDAYNLLGISEDADPKTIKRAHRKLMNEHHPDKLVAKGLPPEMMNMAKEKAQEIQAAYDLIKKEKGIK</sequence>
<evidence type="ECO:0000255" key="1">
    <source>
        <dbReference type="HAMAP-Rule" id="MF_01153"/>
    </source>
</evidence>
<evidence type="ECO:0000256" key="2">
    <source>
        <dbReference type="SAM" id="MobiDB-lite"/>
    </source>
</evidence>
<accession>Q5E861</accession>